<accession>Q7SZB5</accession>
<sequence length="199" mass="22172">MSSMEKHLFNLKFAAKELNRNAKKCEKEEKTEKAKIKKAIQKGNTEIARIHAENAIRQKNQGINFLRMSARVDAVAARVQTAVTMGKVTKSMAGVVKSMDATLKSMNLEKISALMDKFEHQFETLDVQTQQMEDTMSNTTTLTTPQNQVDNLLHEMADEAGLDLSMELPQGQTGSVGTSVASTEQDELSQRLARLRDQV</sequence>
<reference key="1">
    <citation type="submission" date="2003-06" db="EMBL/GenBank/DDBJ databases">
        <authorList>
            <consortium name="NIH - Xenopus Gene Collection (XGC) project"/>
        </authorList>
    </citation>
    <scope>NUCLEOTIDE SEQUENCE [LARGE SCALE MRNA]</scope>
</reference>
<gene>
    <name type="primary">chmp1b</name>
</gene>
<name>CHM1B_XENLA</name>
<protein>
    <recommendedName>
        <fullName>Charged multivesicular body protein 1b</fullName>
    </recommendedName>
    <alternativeName>
        <fullName>Chromatin-modifying protein 1b</fullName>
        <shortName>CHMP1b</shortName>
    </alternativeName>
</protein>
<keyword id="KW-0175">Coiled coil</keyword>
<keyword id="KW-0963">Cytoplasm</keyword>
<keyword id="KW-0967">Endosome</keyword>
<keyword id="KW-0472">Membrane</keyword>
<keyword id="KW-0653">Protein transport</keyword>
<keyword id="KW-1185">Reference proteome</keyword>
<keyword id="KW-0813">Transport</keyword>
<organism>
    <name type="scientific">Xenopus laevis</name>
    <name type="common">African clawed frog</name>
    <dbReference type="NCBI Taxonomy" id="8355"/>
    <lineage>
        <taxon>Eukaryota</taxon>
        <taxon>Metazoa</taxon>
        <taxon>Chordata</taxon>
        <taxon>Craniata</taxon>
        <taxon>Vertebrata</taxon>
        <taxon>Euteleostomi</taxon>
        <taxon>Amphibia</taxon>
        <taxon>Batrachia</taxon>
        <taxon>Anura</taxon>
        <taxon>Pipoidea</taxon>
        <taxon>Pipidae</taxon>
        <taxon>Xenopodinae</taxon>
        <taxon>Xenopus</taxon>
        <taxon>Xenopus</taxon>
    </lineage>
</organism>
<evidence type="ECO:0000250" key="1"/>
<evidence type="ECO:0000255" key="2"/>
<evidence type="ECO:0000256" key="3">
    <source>
        <dbReference type="SAM" id="MobiDB-lite"/>
    </source>
</evidence>
<evidence type="ECO:0000305" key="4"/>
<dbReference type="EMBL" id="BC053765">
    <property type="protein sequence ID" value="AAH53765.1"/>
    <property type="molecule type" value="mRNA"/>
</dbReference>
<dbReference type="RefSeq" id="NP_001079725.1">
    <property type="nucleotide sequence ID" value="NM_001086256.2"/>
</dbReference>
<dbReference type="SMR" id="Q7SZB5"/>
<dbReference type="DNASU" id="379412"/>
<dbReference type="GeneID" id="379412"/>
<dbReference type="KEGG" id="xla:379412"/>
<dbReference type="AGR" id="Xenbase:XB-GENE-5822145"/>
<dbReference type="CTD" id="379412"/>
<dbReference type="Xenbase" id="XB-GENE-5822145">
    <property type="gene designation" value="chmp1b.S"/>
</dbReference>
<dbReference type="OMA" id="QQITMVM"/>
<dbReference type="OrthoDB" id="10266568at2759"/>
<dbReference type="Proteomes" id="UP000186698">
    <property type="component" value="Chromosome 8S"/>
</dbReference>
<dbReference type="Bgee" id="379412">
    <property type="expression patterns" value="Expressed in egg cell and 19 other cell types or tissues"/>
</dbReference>
<dbReference type="GO" id="GO:0005829">
    <property type="term" value="C:cytosol"/>
    <property type="evidence" value="ECO:0007669"/>
    <property type="project" value="UniProtKB-SubCell"/>
</dbReference>
<dbReference type="GO" id="GO:0000815">
    <property type="term" value="C:ESCRT III complex"/>
    <property type="evidence" value="ECO:0000318"/>
    <property type="project" value="GO_Central"/>
</dbReference>
<dbReference type="GO" id="GO:0031902">
    <property type="term" value="C:late endosome membrane"/>
    <property type="evidence" value="ECO:0007669"/>
    <property type="project" value="UniProtKB-SubCell"/>
</dbReference>
<dbReference type="GO" id="GO:0005771">
    <property type="term" value="C:multivesicular body"/>
    <property type="evidence" value="ECO:0000318"/>
    <property type="project" value="GO_Central"/>
</dbReference>
<dbReference type="GO" id="GO:0032509">
    <property type="term" value="P:endosome transport via multivesicular body sorting pathway"/>
    <property type="evidence" value="ECO:0000318"/>
    <property type="project" value="GO_Central"/>
</dbReference>
<dbReference type="GO" id="GO:0045324">
    <property type="term" value="P:late endosome to vacuole transport"/>
    <property type="evidence" value="ECO:0000318"/>
    <property type="project" value="GO_Central"/>
</dbReference>
<dbReference type="GO" id="GO:0015031">
    <property type="term" value="P:protein transport"/>
    <property type="evidence" value="ECO:0000318"/>
    <property type="project" value="GO_Central"/>
</dbReference>
<dbReference type="Gene3D" id="6.10.140.1230">
    <property type="match status" value="1"/>
</dbReference>
<dbReference type="InterPro" id="IPR005024">
    <property type="entry name" value="Snf7_fam"/>
</dbReference>
<dbReference type="PANTHER" id="PTHR10476">
    <property type="entry name" value="CHARGED MULTIVESICULAR BODY PROTEIN"/>
    <property type="match status" value="1"/>
</dbReference>
<dbReference type="Pfam" id="PF03357">
    <property type="entry name" value="Snf7"/>
    <property type="match status" value="1"/>
</dbReference>
<proteinExistence type="evidence at transcript level"/>
<feature type="chain" id="PRO_0000211459" description="Charged multivesicular body protein 1b">
    <location>
        <begin position="1"/>
        <end position="199"/>
    </location>
</feature>
<feature type="region of interest" description="Disordered" evidence="3">
    <location>
        <begin position="167"/>
        <end position="199"/>
    </location>
</feature>
<feature type="coiled-coil region" evidence="2">
    <location>
        <begin position="8"/>
        <end position="42"/>
    </location>
</feature>
<feature type="coiled-coil region" evidence="2">
    <location>
        <begin position="178"/>
        <end position="199"/>
    </location>
</feature>
<feature type="short sequence motif" description="MIT-interacting motif">
    <location>
        <begin position="186"/>
        <end position="196"/>
    </location>
</feature>
<feature type="compositionally biased region" description="Polar residues" evidence="3">
    <location>
        <begin position="170"/>
        <end position="183"/>
    </location>
</feature>
<comment type="function">
    <text>Probable peripherally associated component of the endosomal sorting required for transport complex III (ESCRT-III) which is involved in multivesicular bodies (MVBs) formation and sorting of endosomal cargo proteins into MVBs. MVBs contain intraluminal vesicles (ILVs) that are generated by invagination and scission from the limiting membrane of the endosome and mostly are delivered to lysosomes enabling degradation of membrane proteins, such as stimulated growth factor receptors, lysosomal enzymes and lipids.</text>
</comment>
<comment type="subunit">
    <text>Probable peripherally associated component of the endosomal sorting required for transport complex III (ESCRT-III).</text>
</comment>
<comment type="subcellular location">
    <subcellularLocation>
        <location evidence="1">Cytoplasm</location>
        <location evidence="1">Cytosol</location>
    </subcellularLocation>
    <subcellularLocation>
        <location evidence="1">Endosome</location>
    </subcellularLocation>
    <subcellularLocation>
        <location evidence="1">Late endosome membrane</location>
        <topology evidence="1">Peripheral membrane protein</topology>
    </subcellularLocation>
</comment>
<comment type="similarity">
    <text evidence="4">Belongs to the SNF7 family.</text>
</comment>